<gene>
    <name evidence="1" type="primary">gcvH</name>
    <name type="ordered locus">Xfasm12_0154</name>
</gene>
<keyword id="KW-0450">Lipoyl</keyword>
<organism>
    <name type="scientific">Xylella fastidiosa (strain M12)</name>
    <dbReference type="NCBI Taxonomy" id="405440"/>
    <lineage>
        <taxon>Bacteria</taxon>
        <taxon>Pseudomonadati</taxon>
        <taxon>Pseudomonadota</taxon>
        <taxon>Gammaproteobacteria</taxon>
        <taxon>Lysobacterales</taxon>
        <taxon>Lysobacteraceae</taxon>
        <taxon>Xylella</taxon>
    </lineage>
</organism>
<proteinExistence type="inferred from homology"/>
<reference key="1">
    <citation type="journal article" date="2010" name="J. Bacteriol.">
        <title>Whole genome sequences of two Xylella fastidiosa strains (M12 and M23) causing almond leaf scorch disease in California.</title>
        <authorList>
            <person name="Chen J."/>
            <person name="Xie G."/>
            <person name="Han S."/>
            <person name="Chertkov O."/>
            <person name="Sims D."/>
            <person name="Civerolo E.L."/>
        </authorList>
    </citation>
    <scope>NUCLEOTIDE SEQUENCE [LARGE SCALE GENOMIC DNA]</scope>
    <source>
        <strain>M12</strain>
    </source>
</reference>
<comment type="function">
    <text evidence="1">The glycine cleavage system catalyzes the degradation of glycine. The H protein shuttles the methylamine group of glycine from the P protein to the T protein.</text>
</comment>
<comment type="cofactor">
    <cofactor evidence="1">
        <name>(R)-lipoate</name>
        <dbReference type="ChEBI" id="CHEBI:83088"/>
    </cofactor>
    <text evidence="1">Binds 1 lipoyl cofactor covalently.</text>
</comment>
<comment type="subunit">
    <text evidence="1">The glycine cleavage system is composed of four proteins: P, T, L and H.</text>
</comment>
<comment type="similarity">
    <text evidence="1">Belongs to the GcvH family.</text>
</comment>
<name>GCSH_XYLFM</name>
<feature type="chain" id="PRO_1000114564" description="Glycine cleavage system H protein">
    <location>
        <begin position="1"/>
        <end position="131"/>
    </location>
</feature>
<feature type="domain" description="Lipoyl-binding" evidence="2">
    <location>
        <begin position="24"/>
        <end position="106"/>
    </location>
</feature>
<feature type="modified residue" description="N6-lipoyllysine" evidence="1">
    <location>
        <position position="65"/>
    </location>
</feature>
<protein>
    <recommendedName>
        <fullName evidence="1">Glycine cleavage system H protein</fullName>
    </recommendedName>
</protein>
<dbReference type="EMBL" id="CP000941">
    <property type="protein sequence ID" value="ACA11191.1"/>
    <property type="molecule type" value="Genomic_DNA"/>
</dbReference>
<dbReference type="RefSeq" id="WP_004085045.1">
    <property type="nucleotide sequence ID" value="NC_010513.1"/>
</dbReference>
<dbReference type="SMR" id="B0U269"/>
<dbReference type="KEGG" id="xfm:Xfasm12_0154"/>
<dbReference type="HOGENOM" id="CLU_097408_2_2_6"/>
<dbReference type="GO" id="GO:0005829">
    <property type="term" value="C:cytosol"/>
    <property type="evidence" value="ECO:0007669"/>
    <property type="project" value="TreeGrafter"/>
</dbReference>
<dbReference type="GO" id="GO:0005960">
    <property type="term" value="C:glycine cleavage complex"/>
    <property type="evidence" value="ECO:0007669"/>
    <property type="project" value="InterPro"/>
</dbReference>
<dbReference type="GO" id="GO:0019464">
    <property type="term" value="P:glycine decarboxylation via glycine cleavage system"/>
    <property type="evidence" value="ECO:0007669"/>
    <property type="project" value="UniProtKB-UniRule"/>
</dbReference>
<dbReference type="CDD" id="cd06848">
    <property type="entry name" value="GCS_H"/>
    <property type="match status" value="1"/>
</dbReference>
<dbReference type="Gene3D" id="2.40.50.100">
    <property type="match status" value="1"/>
</dbReference>
<dbReference type="HAMAP" id="MF_00272">
    <property type="entry name" value="GcvH"/>
    <property type="match status" value="1"/>
</dbReference>
<dbReference type="InterPro" id="IPR003016">
    <property type="entry name" value="2-oxoA_DH_lipoyl-BS"/>
</dbReference>
<dbReference type="InterPro" id="IPR000089">
    <property type="entry name" value="Biotin_lipoyl"/>
</dbReference>
<dbReference type="InterPro" id="IPR002930">
    <property type="entry name" value="GCV_H"/>
</dbReference>
<dbReference type="InterPro" id="IPR033753">
    <property type="entry name" value="GCV_H/Fam206"/>
</dbReference>
<dbReference type="InterPro" id="IPR017453">
    <property type="entry name" value="GCV_H_sub"/>
</dbReference>
<dbReference type="InterPro" id="IPR011053">
    <property type="entry name" value="Single_hybrid_motif"/>
</dbReference>
<dbReference type="NCBIfam" id="TIGR00527">
    <property type="entry name" value="gcvH"/>
    <property type="match status" value="1"/>
</dbReference>
<dbReference type="NCBIfam" id="NF002270">
    <property type="entry name" value="PRK01202.1"/>
    <property type="match status" value="1"/>
</dbReference>
<dbReference type="PANTHER" id="PTHR11715">
    <property type="entry name" value="GLYCINE CLEAVAGE SYSTEM H PROTEIN"/>
    <property type="match status" value="1"/>
</dbReference>
<dbReference type="PANTHER" id="PTHR11715:SF3">
    <property type="entry name" value="GLYCINE CLEAVAGE SYSTEM H PROTEIN-RELATED"/>
    <property type="match status" value="1"/>
</dbReference>
<dbReference type="Pfam" id="PF01597">
    <property type="entry name" value="GCV_H"/>
    <property type="match status" value="1"/>
</dbReference>
<dbReference type="SUPFAM" id="SSF51230">
    <property type="entry name" value="Single hybrid motif"/>
    <property type="match status" value="1"/>
</dbReference>
<dbReference type="PROSITE" id="PS50968">
    <property type="entry name" value="BIOTINYL_LIPOYL"/>
    <property type="match status" value="1"/>
</dbReference>
<dbReference type="PROSITE" id="PS00189">
    <property type="entry name" value="LIPOYL"/>
    <property type="match status" value="1"/>
</dbReference>
<sequence>MSDIPGDLKFLKSHEWVRIEDNNRAIVGISDHAQNLLGDLVYVELPNIGDHLDAGATAAVIESVKAASDIYSPVTGKVIEVNTTLSDKPETINEDPYGEGWIMVIEMQAPEEISDLLSPDDYTEVLESDEH</sequence>
<evidence type="ECO:0000255" key="1">
    <source>
        <dbReference type="HAMAP-Rule" id="MF_00272"/>
    </source>
</evidence>
<evidence type="ECO:0000255" key="2">
    <source>
        <dbReference type="PROSITE-ProRule" id="PRU01066"/>
    </source>
</evidence>
<accession>B0U269</accession>